<feature type="chain" id="PRO_0000308816" description="DNA-directed RNA polymerase subunit beta'">
    <location>
        <begin position="1"/>
        <end position="1397"/>
    </location>
</feature>
<feature type="binding site" evidence="1">
    <location>
        <position position="75"/>
    </location>
    <ligand>
        <name>Zn(2+)</name>
        <dbReference type="ChEBI" id="CHEBI:29105"/>
        <label>1</label>
    </ligand>
</feature>
<feature type="binding site" evidence="1">
    <location>
        <position position="77"/>
    </location>
    <ligand>
        <name>Zn(2+)</name>
        <dbReference type="ChEBI" id="CHEBI:29105"/>
        <label>1</label>
    </ligand>
</feature>
<feature type="binding site" evidence="1">
    <location>
        <position position="90"/>
    </location>
    <ligand>
        <name>Zn(2+)</name>
        <dbReference type="ChEBI" id="CHEBI:29105"/>
        <label>1</label>
    </ligand>
</feature>
<feature type="binding site" evidence="1">
    <location>
        <position position="93"/>
    </location>
    <ligand>
        <name>Zn(2+)</name>
        <dbReference type="ChEBI" id="CHEBI:29105"/>
        <label>1</label>
    </ligand>
</feature>
<feature type="binding site" evidence="1">
    <location>
        <position position="465"/>
    </location>
    <ligand>
        <name>Mg(2+)</name>
        <dbReference type="ChEBI" id="CHEBI:18420"/>
    </ligand>
</feature>
<feature type="binding site" evidence="1">
    <location>
        <position position="467"/>
    </location>
    <ligand>
        <name>Mg(2+)</name>
        <dbReference type="ChEBI" id="CHEBI:18420"/>
    </ligand>
</feature>
<feature type="binding site" evidence="1">
    <location>
        <position position="469"/>
    </location>
    <ligand>
        <name>Mg(2+)</name>
        <dbReference type="ChEBI" id="CHEBI:18420"/>
    </ligand>
</feature>
<feature type="binding site" evidence="1">
    <location>
        <position position="819"/>
    </location>
    <ligand>
        <name>Zn(2+)</name>
        <dbReference type="ChEBI" id="CHEBI:29105"/>
        <label>2</label>
    </ligand>
</feature>
<feature type="binding site" evidence="1">
    <location>
        <position position="893"/>
    </location>
    <ligand>
        <name>Zn(2+)</name>
        <dbReference type="ChEBI" id="CHEBI:29105"/>
        <label>2</label>
    </ligand>
</feature>
<feature type="binding site" evidence="1">
    <location>
        <position position="900"/>
    </location>
    <ligand>
        <name>Zn(2+)</name>
        <dbReference type="ChEBI" id="CHEBI:29105"/>
        <label>2</label>
    </ligand>
</feature>
<feature type="binding site" evidence="1">
    <location>
        <position position="903"/>
    </location>
    <ligand>
        <name>Zn(2+)</name>
        <dbReference type="ChEBI" id="CHEBI:29105"/>
        <label>2</label>
    </ligand>
</feature>
<keyword id="KW-0240">DNA-directed RNA polymerase</keyword>
<keyword id="KW-0460">Magnesium</keyword>
<keyword id="KW-0479">Metal-binding</keyword>
<keyword id="KW-0548">Nucleotidyltransferase</keyword>
<keyword id="KW-0804">Transcription</keyword>
<keyword id="KW-0808">Transferase</keyword>
<keyword id="KW-0862">Zinc</keyword>
<dbReference type="EC" id="2.7.7.6" evidence="1"/>
<dbReference type="EMBL" id="CP000521">
    <property type="protein sequence ID" value="ABO10758.2"/>
    <property type="molecule type" value="Genomic_DNA"/>
</dbReference>
<dbReference type="RefSeq" id="WP_000653927.1">
    <property type="nucleotide sequence ID" value="NZ_CP053098.1"/>
</dbReference>
<dbReference type="SMR" id="A3M1G4"/>
<dbReference type="GeneID" id="92892285"/>
<dbReference type="KEGG" id="acb:A1S_0288"/>
<dbReference type="HOGENOM" id="CLU_000524_3_1_6"/>
<dbReference type="GO" id="GO:0000428">
    <property type="term" value="C:DNA-directed RNA polymerase complex"/>
    <property type="evidence" value="ECO:0007669"/>
    <property type="project" value="UniProtKB-KW"/>
</dbReference>
<dbReference type="GO" id="GO:0003677">
    <property type="term" value="F:DNA binding"/>
    <property type="evidence" value="ECO:0007669"/>
    <property type="project" value="UniProtKB-UniRule"/>
</dbReference>
<dbReference type="GO" id="GO:0003899">
    <property type="term" value="F:DNA-directed RNA polymerase activity"/>
    <property type="evidence" value="ECO:0007669"/>
    <property type="project" value="UniProtKB-UniRule"/>
</dbReference>
<dbReference type="GO" id="GO:0000287">
    <property type="term" value="F:magnesium ion binding"/>
    <property type="evidence" value="ECO:0007669"/>
    <property type="project" value="UniProtKB-UniRule"/>
</dbReference>
<dbReference type="GO" id="GO:0008270">
    <property type="term" value="F:zinc ion binding"/>
    <property type="evidence" value="ECO:0007669"/>
    <property type="project" value="UniProtKB-UniRule"/>
</dbReference>
<dbReference type="GO" id="GO:0006351">
    <property type="term" value="P:DNA-templated transcription"/>
    <property type="evidence" value="ECO:0007669"/>
    <property type="project" value="UniProtKB-UniRule"/>
</dbReference>
<dbReference type="CDD" id="cd02655">
    <property type="entry name" value="RNAP_beta'_C"/>
    <property type="match status" value="1"/>
</dbReference>
<dbReference type="CDD" id="cd01609">
    <property type="entry name" value="RNAP_beta'_N"/>
    <property type="match status" value="1"/>
</dbReference>
<dbReference type="FunFam" id="1.10.132.30:FF:000003">
    <property type="entry name" value="DNA-directed RNA polymerase subunit beta"/>
    <property type="match status" value="1"/>
</dbReference>
<dbReference type="FunFam" id="1.10.150.390:FF:000002">
    <property type="entry name" value="DNA-directed RNA polymerase subunit beta"/>
    <property type="match status" value="1"/>
</dbReference>
<dbReference type="FunFam" id="4.10.860.120:FF:000001">
    <property type="entry name" value="DNA-directed RNA polymerase subunit beta"/>
    <property type="match status" value="1"/>
</dbReference>
<dbReference type="Gene3D" id="1.10.132.30">
    <property type="match status" value="1"/>
</dbReference>
<dbReference type="Gene3D" id="1.10.150.390">
    <property type="match status" value="1"/>
</dbReference>
<dbReference type="Gene3D" id="1.10.1790.20">
    <property type="match status" value="1"/>
</dbReference>
<dbReference type="Gene3D" id="1.10.40.90">
    <property type="match status" value="1"/>
</dbReference>
<dbReference type="Gene3D" id="2.40.40.20">
    <property type="match status" value="1"/>
</dbReference>
<dbReference type="Gene3D" id="2.40.50.100">
    <property type="match status" value="3"/>
</dbReference>
<dbReference type="Gene3D" id="4.10.860.120">
    <property type="entry name" value="RNA polymerase II, clamp domain"/>
    <property type="match status" value="1"/>
</dbReference>
<dbReference type="Gene3D" id="1.10.274.100">
    <property type="entry name" value="RNA polymerase Rpb1, domain 3"/>
    <property type="match status" value="1"/>
</dbReference>
<dbReference type="HAMAP" id="MF_01322">
    <property type="entry name" value="RNApol_bact_RpoC"/>
    <property type="match status" value="1"/>
</dbReference>
<dbReference type="InterPro" id="IPR045867">
    <property type="entry name" value="DNA-dir_RpoC_beta_prime"/>
</dbReference>
<dbReference type="InterPro" id="IPR012754">
    <property type="entry name" value="DNA-dir_RpoC_beta_prime_bact"/>
</dbReference>
<dbReference type="InterPro" id="IPR000722">
    <property type="entry name" value="RNA_pol_asu"/>
</dbReference>
<dbReference type="InterPro" id="IPR006592">
    <property type="entry name" value="RNA_pol_N"/>
</dbReference>
<dbReference type="InterPro" id="IPR007080">
    <property type="entry name" value="RNA_pol_Rpb1_1"/>
</dbReference>
<dbReference type="InterPro" id="IPR007066">
    <property type="entry name" value="RNA_pol_Rpb1_3"/>
</dbReference>
<dbReference type="InterPro" id="IPR042102">
    <property type="entry name" value="RNA_pol_Rpb1_3_sf"/>
</dbReference>
<dbReference type="InterPro" id="IPR007083">
    <property type="entry name" value="RNA_pol_Rpb1_4"/>
</dbReference>
<dbReference type="InterPro" id="IPR007081">
    <property type="entry name" value="RNA_pol_Rpb1_5"/>
</dbReference>
<dbReference type="InterPro" id="IPR044893">
    <property type="entry name" value="RNA_pol_Rpb1_clamp_domain"/>
</dbReference>
<dbReference type="InterPro" id="IPR038120">
    <property type="entry name" value="Rpb1_funnel_sf"/>
</dbReference>
<dbReference type="NCBIfam" id="TIGR02386">
    <property type="entry name" value="rpoC_TIGR"/>
    <property type="match status" value="1"/>
</dbReference>
<dbReference type="PANTHER" id="PTHR19376">
    <property type="entry name" value="DNA-DIRECTED RNA POLYMERASE"/>
    <property type="match status" value="1"/>
</dbReference>
<dbReference type="PANTHER" id="PTHR19376:SF54">
    <property type="entry name" value="DNA-DIRECTED RNA POLYMERASE SUBUNIT BETA"/>
    <property type="match status" value="1"/>
</dbReference>
<dbReference type="Pfam" id="PF04997">
    <property type="entry name" value="RNA_pol_Rpb1_1"/>
    <property type="match status" value="1"/>
</dbReference>
<dbReference type="Pfam" id="PF00623">
    <property type="entry name" value="RNA_pol_Rpb1_2"/>
    <property type="match status" value="2"/>
</dbReference>
<dbReference type="Pfam" id="PF04983">
    <property type="entry name" value="RNA_pol_Rpb1_3"/>
    <property type="match status" value="1"/>
</dbReference>
<dbReference type="Pfam" id="PF05000">
    <property type="entry name" value="RNA_pol_Rpb1_4"/>
    <property type="match status" value="1"/>
</dbReference>
<dbReference type="Pfam" id="PF04998">
    <property type="entry name" value="RNA_pol_Rpb1_5"/>
    <property type="match status" value="1"/>
</dbReference>
<dbReference type="SMART" id="SM00663">
    <property type="entry name" value="RPOLA_N"/>
    <property type="match status" value="1"/>
</dbReference>
<dbReference type="SUPFAM" id="SSF64484">
    <property type="entry name" value="beta and beta-prime subunits of DNA dependent RNA-polymerase"/>
    <property type="match status" value="1"/>
</dbReference>
<comment type="function">
    <text evidence="1">DNA-dependent RNA polymerase catalyzes the transcription of DNA into RNA using the four ribonucleoside triphosphates as substrates.</text>
</comment>
<comment type="catalytic activity">
    <reaction evidence="1">
        <text>RNA(n) + a ribonucleoside 5'-triphosphate = RNA(n+1) + diphosphate</text>
        <dbReference type="Rhea" id="RHEA:21248"/>
        <dbReference type="Rhea" id="RHEA-COMP:14527"/>
        <dbReference type="Rhea" id="RHEA-COMP:17342"/>
        <dbReference type="ChEBI" id="CHEBI:33019"/>
        <dbReference type="ChEBI" id="CHEBI:61557"/>
        <dbReference type="ChEBI" id="CHEBI:140395"/>
        <dbReference type="EC" id="2.7.7.6"/>
    </reaction>
</comment>
<comment type="cofactor">
    <cofactor evidence="1">
        <name>Mg(2+)</name>
        <dbReference type="ChEBI" id="CHEBI:18420"/>
    </cofactor>
    <text evidence="1">Binds 1 Mg(2+) ion per subunit.</text>
</comment>
<comment type="cofactor">
    <cofactor evidence="1">
        <name>Zn(2+)</name>
        <dbReference type="ChEBI" id="CHEBI:29105"/>
    </cofactor>
    <text evidence="1">Binds 2 Zn(2+) ions per subunit.</text>
</comment>
<comment type="subunit">
    <text evidence="1">The RNAP catalytic core consists of 2 alpha, 1 beta, 1 beta' and 1 omega subunit. When a sigma factor is associated with the core the holoenzyme is formed, which can initiate transcription.</text>
</comment>
<comment type="similarity">
    <text evidence="1">Belongs to the RNA polymerase beta' chain family.</text>
</comment>
<reference key="1">
    <citation type="journal article" date="2007" name="Genes Dev.">
        <title>New insights into Acinetobacter baumannii pathogenesis revealed by high-density pyrosequencing and transposon mutagenesis.</title>
        <authorList>
            <person name="Smith M.G."/>
            <person name="Gianoulis T.A."/>
            <person name="Pukatzki S."/>
            <person name="Mekalanos J.J."/>
            <person name="Ornston L.N."/>
            <person name="Gerstein M."/>
            <person name="Snyder M."/>
        </authorList>
    </citation>
    <scope>NUCLEOTIDE SEQUENCE [LARGE SCALE GENOMIC DNA]</scope>
    <source>
        <strain>ATCC 17978 / DSM 105126 / CIP 53.77 / LMG 1025 / NCDC KC755 / 5377</strain>
    </source>
</reference>
<proteinExistence type="inferred from homology"/>
<evidence type="ECO:0000255" key="1">
    <source>
        <dbReference type="HAMAP-Rule" id="MF_01322"/>
    </source>
</evidence>
<protein>
    <recommendedName>
        <fullName evidence="1">DNA-directed RNA polymerase subunit beta'</fullName>
        <shortName evidence="1">RNAP subunit beta'</shortName>
        <ecNumber evidence="1">2.7.7.6</ecNumber>
    </recommendedName>
    <alternativeName>
        <fullName evidence="1">RNA polymerase subunit beta'</fullName>
    </alternativeName>
    <alternativeName>
        <fullName evidence="1">Transcriptase subunit beta'</fullName>
    </alternativeName>
</protein>
<sequence>MKDLLDIMRKKTDSDGHAPVEFDRIRIGLASPEMIKSWSHGEVKKPETINYRTFKPERDGLFCAKIFGPVKDYECLCGKYKRMKYKGVICEKCGVEVTTAKVRRERMGHIELASPVAHIWFLKSLPSRIGLLLDMTLRDIERVLYFESYVVTDPGMTPFEKYQLLNDEEYFTALEEHGDEFVAKMGAEAVQDLLKDIDLEAEISRLREEIPQTTSETKLKKASKRLKLMEAFKDSNNKPEWMVMNVLPVLPPDLRPLVPLEGGRFATSDLNDLYRRVINRNNRLKRLLDLAAPDIIVRNEKRMLQESVDALLDNGRRGRAITGSNKRPLKSLADMIKGKQGRFRQNLLGKRVDYSGRSVITVGPTLRLHQCGLPKKMALELFKPFIFAKLQASGQATTIKAAKKMVERETPEVWDVLASVIRQHPVMLNRAPTLHRLGLQAFEPILIEGKAIRLHPLVCAAFNADFDGDQMAVHVPLTLEAQLEARALMMSTNNILSPANGEPIIVPSQDVVLGLYYITRDAVNAKGEGMVFADTHEVNRALATGQVAIHARVKVRVHQTVINENGEREQQTIIVDTTPGRCLLWEVVPEGLSFDMINLEMTKKNISKLINSCYRKLGLKDTVIFADQLMYLGFRQATRSGVSVGMEDMLIPPTKHTIIDKAETEVREIEQQFEQGFVTAGERYNKVVDIWARTNDQVAKAMMDNLSYTLVKNKQGEDEKQKSFNSIYMMSDSGARGSAAQIRQLAGMRGLMAKPDGSIIETPIKANFREGLTVLQYFISTHGARKGLADTALKTANSGYLTRRLVDVAQDLVITEPDCGTSGGLVMTPFIQGGDVIEPLRDRVLGRVTAEDVRRASDDEVVLPRGTLIDEKIAAQLEEAGVDEVKVRSVIACESTFGVCAKCYGRDLARGHLVNPGESVGVMAAQSIGEPGTQLTMRTFHVGGAASRTSAANSVQVRNKGTVRFHNVKTVQHAKGHLVSVSRSGEIGIADELGRERERYKLPYGASILLKDGELVEAGGIVATWDPHTHPLVTEVAGKARFSQIADGVTATSKTDDATGMTTVEILPVTARPASGKDLRPAIVLDTTDGGEQFYFLPQNTIVTVRDGETIGVGDVIGRVPQESSRTRDITGGLPRVADLFEARKPKEHAILAEVSGIVSFGKETKGKNRLVITPDDGSEIYEELIPKWRQINVFEGEHVNRGETISDGPQNPHDILRLKGEVALTNYIVNEVQDVYRLQGVKINDKHIEVIVRQMLRKVDIIDGGDTSFIKGEQVDYIRVVQENQAVLAQNKFPAKFERQLMGITKASLSTDSFISAASFQETTRVLTEAAVTGKEDDLRGLKENVVVGRLIPAGTGLAYHLERRRQEAEAAEHALHNDFSEVDQAFSQALNSEQF</sequence>
<accession>A3M1G4</accession>
<organism>
    <name type="scientific">Acinetobacter baumannii (strain ATCC 17978 / DSM 105126 / CIP 53.77 / LMG 1025 / NCDC KC755 / 5377)</name>
    <dbReference type="NCBI Taxonomy" id="400667"/>
    <lineage>
        <taxon>Bacteria</taxon>
        <taxon>Pseudomonadati</taxon>
        <taxon>Pseudomonadota</taxon>
        <taxon>Gammaproteobacteria</taxon>
        <taxon>Moraxellales</taxon>
        <taxon>Moraxellaceae</taxon>
        <taxon>Acinetobacter</taxon>
        <taxon>Acinetobacter calcoaceticus/baumannii complex</taxon>
    </lineage>
</organism>
<name>RPOC_ACIBT</name>
<gene>
    <name evidence="1" type="primary">rpoC</name>
    <name type="ordered locus">A1S_0288</name>
</gene>